<name>RL34_XANE5</name>
<sequence>MATKRTFQPSNLKRARDHGFRARMATADGRKILARRRAKGRKRLSA</sequence>
<proteinExistence type="inferred from homology"/>
<organism>
    <name type="scientific">Xanthomonas euvesicatoria pv. vesicatoria (strain 85-10)</name>
    <name type="common">Xanthomonas campestris pv. vesicatoria</name>
    <dbReference type="NCBI Taxonomy" id="316273"/>
    <lineage>
        <taxon>Bacteria</taxon>
        <taxon>Pseudomonadati</taxon>
        <taxon>Pseudomonadota</taxon>
        <taxon>Gammaproteobacteria</taxon>
        <taxon>Lysobacterales</taxon>
        <taxon>Lysobacteraceae</taxon>
        <taxon>Xanthomonas</taxon>
    </lineage>
</organism>
<feature type="chain" id="PRO_1000013491" description="Large ribosomal subunit protein bL34">
    <location>
        <begin position="1"/>
        <end position="46"/>
    </location>
</feature>
<feature type="region of interest" description="Disordered" evidence="2">
    <location>
        <begin position="1"/>
        <end position="46"/>
    </location>
</feature>
<feature type="compositionally biased region" description="Polar residues" evidence="2">
    <location>
        <begin position="1"/>
        <end position="11"/>
    </location>
</feature>
<feature type="compositionally biased region" description="Basic residues" evidence="2">
    <location>
        <begin position="32"/>
        <end position="46"/>
    </location>
</feature>
<gene>
    <name evidence="1" type="primary">rpmH</name>
    <name type="ordered locus">XCV4487</name>
</gene>
<dbReference type="EMBL" id="AM039952">
    <property type="protein sequence ID" value="CAJ26218.1"/>
    <property type="molecule type" value="Genomic_DNA"/>
</dbReference>
<dbReference type="RefSeq" id="WP_002805908.1">
    <property type="nucleotide sequence ID" value="NZ_CP017190.1"/>
</dbReference>
<dbReference type="SMR" id="Q3BLZ5"/>
<dbReference type="STRING" id="456327.BJD11_22955"/>
<dbReference type="GeneID" id="97512525"/>
<dbReference type="KEGG" id="xcv:XCV4487"/>
<dbReference type="eggNOG" id="COG0230">
    <property type="taxonomic scope" value="Bacteria"/>
</dbReference>
<dbReference type="HOGENOM" id="CLU_129938_2_0_6"/>
<dbReference type="Proteomes" id="UP000007069">
    <property type="component" value="Chromosome"/>
</dbReference>
<dbReference type="GO" id="GO:1990904">
    <property type="term" value="C:ribonucleoprotein complex"/>
    <property type="evidence" value="ECO:0007669"/>
    <property type="project" value="UniProtKB-KW"/>
</dbReference>
<dbReference type="GO" id="GO:0005840">
    <property type="term" value="C:ribosome"/>
    <property type="evidence" value="ECO:0007669"/>
    <property type="project" value="UniProtKB-KW"/>
</dbReference>
<dbReference type="GO" id="GO:0003735">
    <property type="term" value="F:structural constituent of ribosome"/>
    <property type="evidence" value="ECO:0007669"/>
    <property type="project" value="InterPro"/>
</dbReference>
<dbReference type="GO" id="GO:0006412">
    <property type="term" value="P:translation"/>
    <property type="evidence" value="ECO:0007669"/>
    <property type="project" value="UniProtKB-UniRule"/>
</dbReference>
<dbReference type="FunFam" id="1.10.287.3980:FF:000001">
    <property type="entry name" value="Mitochondrial ribosomal protein L34"/>
    <property type="match status" value="1"/>
</dbReference>
<dbReference type="Gene3D" id="1.10.287.3980">
    <property type="match status" value="1"/>
</dbReference>
<dbReference type="HAMAP" id="MF_00391">
    <property type="entry name" value="Ribosomal_bL34"/>
    <property type="match status" value="1"/>
</dbReference>
<dbReference type="InterPro" id="IPR000271">
    <property type="entry name" value="Ribosomal_bL34"/>
</dbReference>
<dbReference type="InterPro" id="IPR020939">
    <property type="entry name" value="Ribosomal_bL34_CS"/>
</dbReference>
<dbReference type="NCBIfam" id="TIGR01030">
    <property type="entry name" value="rpmH_bact"/>
    <property type="match status" value="1"/>
</dbReference>
<dbReference type="PANTHER" id="PTHR14503:SF4">
    <property type="entry name" value="LARGE RIBOSOMAL SUBUNIT PROTEIN BL34M"/>
    <property type="match status" value="1"/>
</dbReference>
<dbReference type="PANTHER" id="PTHR14503">
    <property type="entry name" value="MITOCHONDRIAL RIBOSOMAL PROTEIN 34 FAMILY MEMBER"/>
    <property type="match status" value="1"/>
</dbReference>
<dbReference type="Pfam" id="PF00468">
    <property type="entry name" value="Ribosomal_L34"/>
    <property type="match status" value="1"/>
</dbReference>
<dbReference type="PROSITE" id="PS00784">
    <property type="entry name" value="RIBOSOMAL_L34"/>
    <property type="match status" value="1"/>
</dbReference>
<reference key="1">
    <citation type="journal article" date="2005" name="J. Bacteriol.">
        <title>Insights into genome plasticity and pathogenicity of the plant pathogenic Bacterium Xanthomonas campestris pv. vesicatoria revealed by the complete genome sequence.</title>
        <authorList>
            <person name="Thieme F."/>
            <person name="Koebnik R."/>
            <person name="Bekel T."/>
            <person name="Berger C."/>
            <person name="Boch J."/>
            <person name="Buettner D."/>
            <person name="Caldana C."/>
            <person name="Gaigalat L."/>
            <person name="Goesmann A."/>
            <person name="Kay S."/>
            <person name="Kirchner O."/>
            <person name="Lanz C."/>
            <person name="Linke B."/>
            <person name="McHardy A.C."/>
            <person name="Meyer F."/>
            <person name="Mittenhuber G."/>
            <person name="Nies D.H."/>
            <person name="Niesbach-Kloesgen U."/>
            <person name="Patschkowski T."/>
            <person name="Rueckert C."/>
            <person name="Rupp O."/>
            <person name="Schneiker S."/>
            <person name="Schuster S.C."/>
            <person name="Vorhoelter F.J."/>
            <person name="Weber E."/>
            <person name="Puehler A."/>
            <person name="Bonas U."/>
            <person name="Bartels D."/>
            <person name="Kaiser O."/>
        </authorList>
    </citation>
    <scope>NUCLEOTIDE SEQUENCE [LARGE SCALE GENOMIC DNA]</scope>
    <source>
        <strain>85-10</strain>
    </source>
</reference>
<keyword id="KW-0687">Ribonucleoprotein</keyword>
<keyword id="KW-0689">Ribosomal protein</keyword>
<accession>Q3BLZ5</accession>
<evidence type="ECO:0000255" key="1">
    <source>
        <dbReference type="HAMAP-Rule" id="MF_00391"/>
    </source>
</evidence>
<evidence type="ECO:0000256" key="2">
    <source>
        <dbReference type="SAM" id="MobiDB-lite"/>
    </source>
</evidence>
<evidence type="ECO:0000305" key="3"/>
<comment type="similarity">
    <text evidence="1">Belongs to the bacterial ribosomal protein bL34 family.</text>
</comment>
<protein>
    <recommendedName>
        <fullName evidence="1">Large ribosomal subunit protein bL34</fullName>
    </recommendedName>
    <alternativeName>
        <fullName evidence="3">50S ribosomal protein L34</fullName>
    </alternativeName>
</protein>